<evidence type="ECO:0000250" key="1">
    <source>
        <dbReference type="UniProtKB" id="B8ZYW0"/>
    </source>
</evidence>
<evidence type="ECO:0000250" key="2">
    <source>
        <dbReference type="UniProtKB" id="O28524"/>
    </source>
</evidence>
<evidence type="ECO:0000255" key="3">
    <source>
        <dbReference type="PROSITE-ProRule" id="PRU00675"/>
    </source>
</evidence>
<evidence type="ECO:0000269" key="4">
    <source>
    </source>
</evidence>
<evidence type="ECO:0000269" key="5">
    <source>
    </source>
</evidence>
<evidence type="ECO:0000269" key="6">
    <source>
    </source>
</evidence>
<evidence type="ECO:0000303" key="7">
    <source>
    </source>
</evidence>
<evidence type="ECO:0000305" key="8"/>
<evidence type="ECO:0000312" key="9">
    <source>
        <dbReference type="EMBL" id="AAM30428.1"/>
    </source>
</evidence>
<reference key="1">
    <citation type="journal article" date="2002" name="J. Mol. Microbiol. Biotechnol.">
        <title>The genome of Methanosarcina mazei: evidence for lateral gene transfer between Bacteria and Archaea.</title>
        <authorList>
            <person name="Deppenmeier U."/>
            <person name="Johann A."/>
            <person name="Hartsch T."/>
            <person name="Merkl R."/>
            <person name="Schmitz R.A."/>
            <person name="Martinez-Arias R."/>
            <person name="Henne A."/>
            <person name="Wiezer A."/>
            <person name="Baeumer S."/>
            <person name="Jacobi C."/>
            <person name="Brueggemann H."/>
            <person name="Lienard T."/>
            <person name="Christmann A."/>
            <person name="Boemecke M."/>
            <person name="Steckel S."/>
            <person name="Bhattacharyya A."/>
            <person name="Lykidis A."/>
            <person name="Overbeek R."/>
            <person name="Klenk H.-P."/>
            <person name="Gunsalus R.P."/>
            <person name="Fritz H.-J."/>
            <person name="Gottschalk G."/>
        </authorList>
    </citation>
    <scope>NUCLEOTIDE SEQUENCE [LARGE SCALE GENOMIC DNA]</scope>
    <source>
        <strain>ATCC BAA-159 / DSM 3647 / Goe1 / Go1 / JCM 11833 / OCM 88</strain>
    </source>
</reference>
<reference key="2">
    <citation type="journal article" date="2002" name="J. Bacteriol.">
        <title>Characterization of GlnK1 from Methanosarcina mazei strain Goe1: complementation of an Escherichia coli glnK mutant strain by GlnK1.</title>
        <authorList>
            <person name="Ehlers C."/>
            <person name="Grabbe R."/>
            <person name="Veit K."/>
            <person name="Schmitz R.A."/>
        </authorList>
    </citation>
    <scope>FUNCTION</scope>
    <scope>SUBUNIT</scope>
    <scope>INDUCTION</scope>
    <scope>LACK OF URIDYLYLATION</scope>
    <source>
        <strain>ATCC BAA-159 / DSM 3647 / Goe1 / Go1 / JCM 11833 / OCM 88</strain>
    </source>
</reference>
<reference key="3">
    <citation type="journal article" date="2005" name="Mol. Microbiol.">
        <title>Unique mechanistic features of post-translational regulation of glutamine synthetase activity in Methanosarcina mazei strain Goe1 in response to nitrogen availability.</title>
        <authorList>
            <person name="Ehlers C."/>
            <person name="Weidenbach K."/>
            <person name="Veit K."/>
            <person name="Forchhammer K."/>
            <person name="Schmitz R.A."/>
        </authorList>
    </citation>
    <scope>FUNCTION</scope>
    <scope>ACTIVITY REGULATION</scope>
    <scope>INTERACTION WITH GLNA1</scope>
    <source>
        <strain>ATCC BAA-159 / DSM 3647 / Goe1 / Go1 / JCM 11833 / OCM 88</strain>
    </source>
</reference>
<reference key="4">
    <citation type="journal article" date="2005" name="Mol. Genet. Genomics">
        <title>Development of genetic methods and construction of a chromosomal glnK1 mutant in Methanosarcina mazei strain Goe1.</title>
        <authorList>
            <person name="Ehlers C."/>
            <person name="Weidenbach K."/>
            <person name="Veit K."/>
            <person name="Deppenmeier U."/>
            <person name="Metcalf W.W."/>
            <person name="Schmitz R.A."/>
        </authorList>
    </citation>
    <scope>FUNCTION</scope>
    <scope>DISRUPTION PHENOTYPE</scope>
    <source>
        <strain>ATCC BAA-159 / DSM 3647 / Goe1 / Go1 / JCM 11833 / OCM 88</strain>
    </source>
</reference>
<sequence>MVAMKYVIAMIRPERLDAVKRELQKIEVSRLTVSSVSGYGAQKGYMEIYRAMEYDANLLEKIKIEIAVNDEFLEPTIEAIKTGAKGSDGYVGSGKIFVLPLENVIRIRTNETGPEAI</sequence>
<name>GLNK1_METMA</name>
<comment type="function">
    <text evidence="4 5 6">Involved in the regulation of nitrogen metabolism (PubMed:11807063). Regulates the activity of its targets by protein-protein interaction in response to the nitrogen status of the cell (PubMed:15752204, PubMed:15824904). Allows finetuning control of the glutamine synthetase GlnA1 under changing nitrogen availabilities via direct protein interaction (PubMed:15752204).</text>
</comment>
<comment type="activity regulation">
    <text evidence="5">Inhibitory effects on GlnA1 are abolished in the presence of the effector 2-oxoglutarate.</text>
</comment>
<comment type="subunit">
    <text evidence="4 5">Homotrimer (PubMed:11807063). Interacts and forms stable complexes with the glutamine synthetase GlnA1 (PubMed:15752204).</text>
</comment>
<comment type="subcellular location">
    <subcellularLocation>
        <location evidence="1">Cytoplasm</location>
    </subcellularLocation>
</comment>
<comment type="induction">
    <text evidence="4">Expressed under nitrogen-limiting conditions.</text>
</comment>
<comment type="disruption phenotype">
    <text evidence="6">Disruption mutant exhibits a partial growth defect under nitrogen limitation when molecular nitrogen is used as the sole nitrogen source.</text>
</comment>
<comment type="miscellaneous">
    <text evidence="4">Unlike the enteric GlnK proteins, Glnk1 is not covalently modified by uridylylation under nitrogen limitation.</text>
</comment>
<comment type="similarity">
    <text evidence="3">Belongs to the P(II) protein family.</text>
</comment>
<proteinExistence type="evidence at protein level"/>
<protein>
    <recommendedName>
        <fullName evidence="8">Nitrogen regulatory protein GlnK1</fullName>
    </recommendedName>
</protein>
<gene>
    <name evidence="7" type="primary">glnK1</name>
    <name evidence="9" type="ordered locus">MM_0732</name>
</gene>
<organism>
    <name type="scientific">Methanosarcina mazei (strain ATCC BAA-159 / DSM 3647 / Goe1 / Go1 / JCM 11833 / OCM 88)</name>
    <name type="common">Methanosarcina frisia</name>
    <dbReference type="NCBI Taxonomy" id="192952"/>
    <lineage>
        <taxon>Archaea</taxon>
        <taxon>Methanobacteriati</taxon>
        <taxon>Methanobacteriota</taxon>
        <taxon>Stenosarchaea group</taxon>
        <taxon>Methanomicrobia</taxon>
        <taxon>Methanosarcinales</taxon>
        <taxon>Methanosarcinaceae</taxon>
        <taxon>Methanosarcina</taxon>
    </lineage>
</organism>
<feature type="chain" id="PRO_0000453017" description="Nitrogen regulatory protein GlnK1">
    <location>
        <begin position="1"/>
        <end position="117"/>
    </location>
</feature>
<feature type="binding site" evidence="2">
    <location>
        <position position="32"/>
    </location>
    <ligand>
        <name>ADP</name>
        <dbReference type="ChEBI" id="CHEBI:456216"/>
    </ligand>
</feature>
<feature type="binding site" evidence="2">
    <location>
        <position position="32"/>
    </location>
    <ligand>
        <name>ATP</name>
        <dbReference type="ChEBI" id="CHEBI:30616"/>
    </ligand>
</feature>
<feature type="binding site" evidence="2">
    <location>
        <begin position="40"/>
        <end position="42"/>
    </location>
    <ligand>
        <name>ADP</name>
        <dbReference type="ChEBI" id="CHEBI:456216"/>
    </ligand>
</feature>
<feature type="binding site" evidence="2">
    <location>
        <begin position="40"/>
        <end position="42"/>
    </location>
    <ligand>
        <name>ATP</name>
        <dbReference type="ChEBI" id="CHEBI:30616"/>
    </ligand>
</feature>
<feature type="binding site" evidence="2">
    <location>
        <begin position="92"/>
        <end position="95"/>
    </location>
    <ligand>
        <name>ADP</name>
        <dbReference type="ChEBI" id="CHEBI:456216"/>
    </ligand>
</feature>
<feature type="binding site" evidence="2">
    <location>
        <begin position="92"/>
        <end position="95"/>
    </location>
    <ligand>
        <name>ATP</name>
        <dbReference type="ChEBI" id="CHEBI:30616"/>
    </ligand>
</feature>
<accession>Q8PYW7</accession>
<dbReference type="EMBL" id="AE008384">
    <property type="protein sequence ID" value="AAM30428.1"/>
    <property type="molecule type" value="Genomic_DNA"/>
</dbReference>
<dbReference type="PDB" id="8TGE">
    <property type="method" value="X-ray"/>
    <property type="resolution" value="2.30 A"/>
    <property type="chains" value="G/J/Z=1-117"/>
</dbReference>
<dbReference type="PDBsum" id="8TGE"/>
<dbReference type="SMR" id="Q8PYW7"/>
<dbReference type="KEGG" id="mma:MM_0732"/>
<dbReference type="PATRIC" id="fig|192952.21.peg.869"/>
<dbReference type="eggNOG" id="arCOG02305">
    <property type="taxonomic scope" value="Archaea"/>
</dbReference>
<dbReference type="HOGENOM" id="CLU_082268_0_0_2"/>
<dbReference type="Proteomes" id="UP000000595">
    <property type="component" value="Chromosome"/>
</dbReference>
<dbReference type="GO" id="GO:0005829">
    <property type="term" value="C:cytosol"/>
    <property type="evidence" value="ECO:0007669"/>
    <property type="project" value="TreeGrafter"/>
</dbReference>
<dbReference type="GO" id="GO:0005524">
    <property type="term" value="F:ATP binding"/>
    <property type="evidence" value="ECO:0007669"/>
    <property type="project" value="UniProtKB-KW"/>
</dbReference>
<dbReference type="GO" id="GO:0030234">
    <property type="term" value="F:enzyme regulator activity"/>
    <property type="evidence" value="ECO:0007669"/>
    <property type="project" value="InterPro"/>
</dbReference>
<dbReference type="GO" id="GO:0006808">
    <property type="term" value="P:regulation of nitrogen utilization"/>
    <property type="evidence" value="ECO:0007669"/>
    <property type="project" value="InterPro"/>
</dbReference>
<dbReference type="Gene3D" id="3.30.70.120">
    <property type="match status" value="1"/>
</dbReference>
<dbReference type="InterPro" id="IPR002187">
    <property type="entry name" value="N-reg_PII"/>
</dbReference>
<dbReference type="InterPro" id="IPR011322">
    <property type="entry name" value="N-reg_PII-like_a/b"/>
</dbReference>
<dbReference type="InterPro" id="IPR015867">
    <property type="entry name" value="N-reg_PII/ATP_PRibTrfase_C"/>
</dbReference>
<dbReference type="PANTHER" id="PTHR30115">
    <property type="entry name" value="NITROGEN REGULATORY PROTEIN P-II"/>
    <property type="match status" value="1"/>
</dbReference>
<dbReference type="PANTHER" id="PTHR30115:SF18">
    <property type="entry name" value="NITROGEN REGULATORY PROTEIN P-II"/>
    <property type="match status" value="1"/>
</dbReference>
<dbReference type="Pfam" id="PF00543">
    <property type="entry name" value="P-II"/>
    <property type="match status" value="1"/>
</dbReference>
<dbReference type="PRINTS" id="PR00340">
    <property type="entry name" value="PIIGLNB"/>
</dbReference>
<dbReference type="SMART" id="SM00938">
    <property type="entry name" value="P-II"/>
    <property type="match status" value="1"/>
</dbReference>
<dbReference type="SUPFAM" id="SSF54913">
    <property type="entry name" value="GlnB-like"/>
    <property type="match status" value="1"/>
</dbReference>
<dbReference type="PROSITE" id="PS51343">
    <property type="entry name" value="PII_GLNB_DOM"/>
    <property type="match status" value="1"/>
</dbReference>
<keyword id="KW-0002">3D-structure</keyword>
<keyword id="KW-0067">ATP-binding</keyword>
<keyword id="KW-0963">Cytoplasm</keyword>
<keyword id="KW-0547">Nucleotide-binding</keyword>